<accession>A1VRH7</accession>
<proteinExistence type="inferred from homology"/>
<sequence length="421" mass="45718">MAEKKGSSSEKTLYCSFCGKSQHEVKKLIAGPSVFVCDECIDLCNEIIRDELPSGSEAGEARSDLPTPAEIKATLDGYVIGQEPAKRTLAVAVYNHYKRLRHKESAKKDDVELTKSNILLIGPTGSGKTLLAQTLARTLNVPFVMADATTLTEAGYVGEDVENIIQKLLQSCNYEVDRAQQGIVYIDEIDKISRKSDNPSITRDVSGEGVQQALLKLMEGTMASVPPQGGRKHPNQDFLQVDTTNILFICGGAFSGLEKVIENRTEASGIGFGAAVKSKKARSLTEAFKDVEPEDLIKFGLIPELVGRMPVIATLAELSEDALVQILTEPKNAVVKQFSKLLAMEGVDLEIRPSALKAIARKALARKTGARGLRSILEQSLIDTMFDLPTTSNVAKVVVDESTIEENKPPLLVYREAAKKA</sequence>
<reference key="1">
    <citation type="journal article" date="2009" name="Environ. Microbiol.">
        <title>The genome of Polaromonas naphthalenivorans strain CJ2, isolated from coal tar-contaminated sediment, reveals physiological and metabolic versatility and evolution through extensive horizontal gene transfer.</title>
        <authorList>
            <person name="Yagi J.M."/>
            <person name="Sims D."/>
            <person name="Brettin T."/>
            <person name="Bruce D."/>
            <person name="Madsen E.L."/>
        </authorList>
    </citation>
    <scope>NUCLEOTIDE SEQUENCE [LARGE SCALE GENOMIC DNA]</scope>
    <source>
        <strain>CJ2</strain>
    </source>
</reference>
<organism>
    <name type="scientific">Polaromonas naphthalenivorans (strain CJ2)</name>
    <dbReference type="NCBI Taxonomy" id="365044"/>
    <lineage>
        <taxon>Bacteria</taxon>
        <taxon>Pseudomonadati</taxon>
        <taxon>Pseudomonadota</taxon>
        <taxon>Betaproteobacteria</taxon>
        <taxon>Burkholderiales</taxon>
        <taxon>Comamonadaceae</taxon>
        <taxon>Polaromonas</taxon>
    </lineage>
</organism>
<protein>
    <recommendedName>
        <fullName evidence="1">ATP-dependent Clp protease ATP-binding subunit ClpX</fullName>
    </recommendedName>
</protein>
<keyword id="KW-0067">ATP-binding</keyword>
<keyword id="KW-0143">Chaperone</keyword>
<keyword id="KW-0479">Metal-binding</keyword>
<keyword id="KW-0547">Nucleotide-binding</keyword>
<keyword id="KW-1185">Reference proteome</keyword>
<keyword id="KW-0862">Zinc</keyword>
<dbReference type="EMBL" id="CP000529">
    <property type="protein sequence ID" value="ABM38255.1"/>
    <property type="molecule type" value="Genomic_DNA"/>
</dbReference>
<dbReference type="RefSeq" id="WP_011802329.1">
    <property type="nucleotide sequence ID" value="NC_008781.1"/>
</dbReference>
<dbReference type="SMR" id="A1VRH7"/>
<dbReference type="STRING" id="365044.Pnap_2956"/>
<dbReference type="KEGG" id="pna:Pnap_2956"/>
<dbReference type="eggNOG" id="COG1219">
    <property type="taxonomic scope" value="Bacteria"/>
</dbReference>
<dbReference type="HOGENOM" id="CLU_014218_8_2_4"/>
<dbReference type="OrthoDB" id="9804062at2"/>
<dbReference type="Proteomes" id="UP000000644">
    <property type="component" value="Chromosome"/>
</dbReference>
<dbReference type="GO" id="GO:0009376">
    <property type="term" value="C:HslUV protease complex"/>
    <property type="evidence" value="ECO:0007669"/>
    <property type="project" value="TreeGrafter"/>
</dbReference>
<dbReference type="GO" id="GO:0005524">
    <property type="term" value="F:ATP binding"/>
    <property type="evidence" value="ECO:0007669"/>
    <property type="project" value="UniProtKB-UniRule"/>
</dbReference>
<dbReference type="GO" id="GO:0016887">
    <property type="term" value="F:ATP hydrolysis activity"/>
    <property type="evidence" value="ECO:0007669"/>
    <property type="project" value="InterPro"/>
</dbReference>
<dbReference type="GO" id="GO:0140662">
    <property type="term" value="F:ATP-dependent protein folding chaperone"/>
    <property type="evidence" value="ECO:0007669"/>
    <property type="project" value="InterPro"/>
</dbReference>
<dbReference type="GO" id="GO:0046983">
    <property type="term" value="F:protein dimerization activity"/>
    <property type="evidence" value="ECO:0007669"/>
    <property type="project" value="InterPro"/>
</dbReference>
<dbReference type="GO" id="GO:0051082">
    <property type="term" value="F:unfolded protein binding"/>
    <property type="evidence" value="ECO:0007669"/>
    <property type="project" value="UniProtKB-UniRule"/>
</dbReference>
<dbReference type="GO" id="GO:0008270">
    <property type="term" value="F:zinc ion binding"/>
    <property type="evidence" value="ECO:0007669"/>
    <property type="project" value="InterPro"/>
</dbReference>
<dbReference type="GO" id="GO:0051301">
    <property type="term" value="P:cell division"/>
    <property type="evidence" value="ECO:0007669"/>
    <property type="project" value="TreeGrafter"/>
</dbReference>
<dbReference type="GO" id="GO:0051603">
    <property type="term" value="P:proteolysis involved in protein catabolic process"/>
    <property type="evidence" value="ECO:0007669"/>
    <property type="project" value="TreeGrafter"/>
</dbReference>
<dbReference type="CDD" id="cd19497">
    <property type="entry name" value="RecA-like_ClpX"/>
    <property type="match status" value="1"/>
</dbReference>
<dbReference type="FunFam" id="1.10.8.60:FF:000002">
    <property type="entry name" value="ATP-dependent Clp protease ATP-binding subunit ClpX"/>
    <property type="match status" value="1"/>
</dbReference>
<dbReference type="FunFam" id="3.40.50.300:FF:000005">
    <property type="entry name" value="ATP-dependent Clp protease ATP-binding subunit ClpX"/>
    <property type="match status" value="1"/>
</dbReference>
<dbReference type="Gene3D" id="1.10.8.60">
    <property type="match status" value="1"/>
</dbReference>
<dbReference type="Gene3D" id="6.20.220.10">
    <property type="entry name" value="ClpX chaperone, C4-type zinc finger domain"/>
    <property type="match status" value="1"/>
</dbReference>
<dbReference type="Gene3D" id="3.40.50.300">
    <property type="entry name" value="P-loop containing nucleotide triphosphate hydrolases"/>
    <property type="match status" value="1"/>
</dbReference>
<dbReference type="HAMAP" id="MF_00175">
    <property type="entry name" value="ClpX"/>
    <property type="match status" value="1"/>
</dbReference>
<dbReference type="InterPro" id="IPR003593">
    <property type="entry name" value="AAA+_ATPase"/>
</dbReference>
<dbReference type="InterPro" id="IPR050052">
    <property type="entry name" value="ATP-dep_Clp_protease_ClpX"/>
</dbReference>
<dbReference type="InterPro" id="IPR003959">
    <property type="entry name" value="ATPase_AAA_core"/>
</dbReference>
<dbReference type="InterPro" id="IPR019489">
    <property type="entry name" value="Clp_ATPase_C"/>
</dbReference>
<dbReference type="InterPro" id="IPR004487">
    <property type="entry name" value="Clp_protease_ATP-bd_su_ClpX"/>
</dbReference>
<dbReference type="InterPro" id="IPR046425">
    <property type="entry name" value="ClpX_bact"/>
</dbReference>
<dbReference type="InterPro" id="IPR027417">
    <property type="entry name" value="P-loop_NTPase"/>
</dbReference>
<dbReference type="InterPro" id="IPR010603">
    <property type="entry name" value="Znf_CppX_C4"/>
</dbReference>
<dbReference type="InterPro" id="IPR038366">
    <property type="entry name" value="Znf_CppX_C4_sf"/>
</dbReference>
<dbReference type="NCBIfam" id="TIGR00382">
    <property type="entry name" value="clpX"/>
    <property type="match status" value="1"/>
</dbReference>
<dbReference type="NCBIfam" id="NF003745">
    <property type="entry name" value="PRK05342.1"/>
    <property type="match status" value="1"/>
</dbReference>
<dbReference type="PANTHER" id="PTHR48102:SF7">
    <property type="entry name" value="ATP-DEPENDENT CLP PROTEASE ATP-BINDING SUBUNIT CLPX-LIKE, MITOCHONDRIAL"/>
    <property type="match status" value="1"/>
</dbReference>
<dbReference type="PANTHER" id="PTHR48102">
    <property type="entry name" value="ATP-DEPENDENT CLP PROTEASE ATP-BINDING SUBUNIT CLPX-LIKE, MITOCHONDRIAL-RELATED"/>
    <property type="match status" value="1"/>
</dbReference>
<dbReference type="Pfam" id="PF07724">
    <property type="entry name" value="AAA_2"/>
    <property type="match status" value="1"/>
</dbReference>
<dbReference type="Pfam" id="PF10431">
    <property type="entry name" value="ClpB_D2-small"/>
    <property type="match status" value="1"/>
</dbReference>
<dbReference type="Pfam" id="PF06689">
    <property type="entry name" value="zf-C4_ClpX"/>
    <property type="match status" value="1"/>
</dbReference>
<dbReference type="SMART" id="SM00382">
    <property type="entry name" value="AAA"/>
    <property type="match status" value="1"/>
</dbReference>
<dbReference type="SMART" id="SM01086">
    <property type="entry name" value="ClpB_D2-small"/>
    <property type="match status" value="1"/>
</dbReference>
<dbReference type="SMART" id="SM00994">
    <property type="entry name" value="zf-C4_ClpX"/>
    <property type="match status" value="1"/>
</dbReference>
<dbReference type="SUPFAM" id="SSF57716">
    <property type="entry name" value="Glucocorticoid receptor-like (DNA-binding domain)"/>
    <property type="match status" value="1"/>
</dbReference>
<dbReference type="SUPFAM" id="SSF52540">
    <property type="entry name" value="P-loop containing nucleoside triphosphate hydrolases"/>
    <property type="match status" value="1"/>
</dbReference>
<dbReference type="PROSITE" id="PS51902">
    <property type="entry name" value="CLPX_ZB"/>
    <property type="match status" value="1"/>
</dbReference>
<name>CLPX_POLNA</name>
<evidence type="ECO:0000255" key="1">
    <source>
        <dbReference type="HAMAP-Rule" id="MF_00175"/>
    </source>
</evidence>
<evidence type="ECO:0000255" key="2">
    <source>
        <dbReference type="PROSITE-ProRule" id="PRU01250"/>
    </source>
</evidence>
<gene>
    <name evidence="1" type="primary">clpX</name>
    <name type="ordered locus">Pnap_2956</name>
</gene>
<feature type="chain" id="PRO_1000024610" description="ATP-dependent Clp protease ATP-binding subunit ClpX">
    <location>
        <begin position="1"/>
        <end position="421"/>
    </location>
</feature>
<feature type="domain" description="ClpX-type ZB" evidence="2">
    <location>
        <begin position="3"/>
        <end position="56"/>
    </location>
</feature>
<feature type="binding site" evidence="2">
    <location>
        <position position="15"/>
    </location>
    <ligand>
        <name>Zn(2+)</name>
        <dbReference type="ChEBI" id="CHEBI:29105"/>
    </ligand>
</feature>
<feature type="binding site" evidence="2">
    <location>
        <position position="18"/>
    </location>
    <ligand>
        <name>Zn(2+)</name>
        <dbReference type="ChEBI" id="CHEBI:29105"/>
    </ligand>
</feature>
<feature type="binding site" evidence="2">
    <location>
        <position position="37"/>
    </location>
    <ligand>
        <name>Zn(2+)</name>
        <dbReference type="ChEBI" id="CHEBI:29105"/>
    </ligand>
</feature>
<feature type="binding site" evidence="2">
    <location>
        <position position="40"/>
    </location>
    <ligand>
        <name>Zn(2+)</name>
        <dbReference type="ChEBI" id="CHEBI:29105"/>
    </ligand>
</feature>
<feature type="binding site" evidence="1">
    <location>
        <begin position="123"/>
        <end position="130"/>
    </location>
    <ligand>
        <name>ATP</name>
        <dbReference type="ChEBI" id="CHEBI:30616"/>
    </ligand>
</feature>
<comment type="function">
    <text evidence="1">ATP-dependent specificity component of the Clp protease. It directs the protease to specific substrates. Can perform chaperone functions in the absence of ClpP.</text>
</comment>
<comment type="subunit">
    <text evidence="1">Component of the ClpX-ClpP complex. Forms a hexameric ring that, in the presence of ATP, binds to fourteen ClpP subunits assembled into a disk-like structure with a central cavity, resembling the structure of eukaryotic proteasomes.</text>
</comment>
<comment type="similarity">
    <text evidence="1">Belongs to the ClpX chaperone family.</text>
</comment>